<dbReference type="EMBL" id="CP000377">
    <property type="protein sequence ID" value="ABF63646.1"/>
    <property type="molecule type" value="Genomic_DNA"/>
</dbReference>
<dbReference type="RefSeq" id="WP_005623412.1">
    <property type="nucleotide sequence ID" value="NC_008044.1"/>
</dbReference>
<dbReference type="SMR" id="Q1GI70"/>
<dbReference type="STRING" id="292414.TM1040_0913"/>
<dbReference type="GeneID" id="28249932"/>
<dbReference type="KEGG" id="sit:TM1040_0913"/>
<dbReference type="eggNOG" id="COG0776">
    <property type="taxonomic scope" value="Bacteria"/>
</dbReference>
<dbReference type="HOGENOM" id="CLU_105066_1_1_5"/>
<dbReference type="OrthoDB" id="9797747at2"/>
<dbReference type="Proteomes" id="UP000000636">
    <property type="component" value="Chromosome"/>
</dbReference>
<dbReference type="GO" id="GO:0005829">
    <property type="term" value="C:cytosol"/>
    <property type="evidence" value="ECO:0007669"/>
    <property type="project" value="TreeGrafter"/>
</dbReference>
<dbReference type="GO" id="GO:0003677">
    <property type="term" value="F:DNA binding"/>
    <property type="evidence" value="ECO:0007669"/>
    <property type="project" value="UniProtKB-UniRule"/>
</dbReference>
<dbReference type="GO" id="GO:0030527">
    <property type="term" value="F:structural constituent of chromatin"/>
    <property type="evidence" value="ECO:0007669"/>
    <property type="project" value="InterPro"/>
</dbReference>
<dbReference type="GO" id="GO:0006310">
    <property type="term" value="P:DNA recombination"/>
    <property type="evidence" value="ECO:0007669"/>
    <property type="project" value="UniProtKB-UniRule"/>
</dbReference>
<dbReference type="GO" id="GO:0009893">
    <property type="term" value="P:positive regulation of metabolic process"/>
    <property type="evidence" value="ECO:0007669"/>
    <property type="project" value="UniProtKB-ARBA"/>
</dbReference>
<dbReference type="GO" id="GO:0006355">
    <property type="term" value="P:regulation of DNA-templated transcription"/>
    <property type="evidence" value="ECO:0007669"/>
    <property type="project" value="UniProtKB-UniRule"/>
</dbReference>
<dbReference type="GO" id="GO:0006417">
    <property type="term" value="P:regulation of translation"/>
    <property type="evidence" value="ECO:0007669"/>
    <property type="project" value="UniProtKB-UniRule"/>
</dbReference>
<dbReference type="CDD" id="cd13835">
    <property type="entry name" value="IHF_A"/>
    <property type="match status" value="1"/>
</dbReference>
<dbReference type="Gene3D" id="4.10.520.10">
    <property type="entry name" value="IHF-like DNA-binding proteins"/>
    <property type="match status" value="1"/>
</dbReference>
<dbReference type="HAMAP" id="MF_00380">
    <property type="entry name" value="IHF_alpha"/>
    <property type="match status" value="1"/>
</dbReference>
<dbReference type="InterPro" id="IPR000119">
    <property type="entry name" value="Hist_DNA-bd"/>
</dbReference>
<dbReference type="InterPro" id="IPR020816">
    <property type="entry name" value="Histone-like_DNA-bd_CS"/>
</dbReference>
<dbReference type="InterPro" id="IPR010992">
    <property type="entry name" value="IHF-like_DNA-bd_dom_sf"/>
</dbReference>
<dbReference type="InterPro" id="IPR005684">
    <property type="entry name" value="IHF_alpha"/>
</dbReference>
<dbReference type="NCBIfam" id="TIGR00987">
    <property type="entry name" value="himA"/>
    <property type="match status" value="1"/>
</dbReference>
<dbReference type="NCBIfam" id="NF001401">
    <property type="entry name" value="PRK00285.1"/>
    <property type="match status" value="1"/>
</dbReference>
<dbReference type="PANTHER" id="PTHR33175">
    <property type="entry name" value="DNA-BINDING PROTEIN HU"/>
    <property type="match status" value="1"/>
</dbReference>
<dbReference type="PANTHER" id="PTHR33175:SF2">
    <property type="entry name" value="INTEGRATION HOST FACTOR SUBUNIT ALPHA"/>
    <property type="match status" value="1"/>
</dbReference>
<dbReference type="Pfam" id="PF00216">
    <property type="entry name" value="Bac_DNA_binding"/>
    <property type="match status" value="1"/>
</dbReference>
<dbReference type="PRINTS" id="PR01727">
    <property type="entry name" value="DNABINDINGHU"/>
</dbReference>
<dbReference type="SMART" id="SM00411">
    <property type="entry name" value="BHL"/>
    <property type="match status" value="1"/>
</dbReference>
<dbReference type="SUPFAM" id="SSF47729">
    <property type="entry name" value="IHF-like DNA-binding proteins"/>
    <property type="match status" value="1"/>
</dbReference>
<dbReference type="PROSITE" id="PS00045">
    <property type="entry name" value="HISTONE_LIKE"/>
    <property type="match status" value="1"/>
</dbReference>
<proteinExistence type="inferred from homology"/>
<name>IHFA_RUEST</name>
<accession>Q1GI70</accession>
<keyword id="KW-0233">DNA recombination</keyword>
<keyword id="KW-0238">DNA-binding</keyword>
<keyword id="KW-1185">Reference proteome</keyword>
<keyword id="KW-0804">Transcription</keyword>
<keyword id="KW-0805">Transcription regulation</keyword>
<keyword id="KW-0810">Translation regulation</keyword>
<organism>
    <name type="scientific">Ruegeria sp. (strain TM1040)</name>
    <name type="common">Silicibacter sp.</name>
    <dbReference type="NCBI Taxonomy" id="292414"/>
    <lineage>
        <taxon>Bacteria</taxon>
        <taxon>Pseudomonadati</taxon>
        <taxon>Pseudomonadota</taxon>
        <taxon>Alphaproteobacteria</taxon>
        <taxon>Rhodobacterales</taxon>
        <taxon>Roseobacteraceae</taxon>
        <taxon>Ruegeria</taxon>
    </lineage>
</organism>
<reference key="1">
    <citation type="submission" date="2006-05" db="EMBL/GenBank/DDBJ databases">
        <title>Complete sequence of chromosome of Silicibacter sp. TM1040.</title>
        <authorList>
            <consortium name="US DOE Joint Genome Institute"/>
            <person name="Copeland A."/>
            <person name="Lucas S."/>
            <person name="Lapidus A."/>
            <person name="Barry K."/>
            <person name="Detter J.C."/>
            <person name="Glavina del Rio T."/>
            <person name="Hammon N."/>
            <person name="Israni S."/>
            <person name="Dalin E."/>
            <person name="Tice H."/>
            <person name="Pitluck S."/>
            <person name="Brettin T."/>
            <person name="Bruce D."/>
            <person name="Han C."/>
            <person name="Tapia R."/>
            <person name="Goodwin L."/>
            <person name="Thompson L.S."/>
            <person name="Gilna P."/>
            <person name="Schmutz J."/>
            <person name="Larimer F."/>
            <person name="Land M."/>
            <person name="Hauser L."/>
            <person name="Kyrpides N."/>
            <person name="Kim E."/>
            <person name="Belas R."/>
            <person name="Moran M.A."/>
            <person name="Buchan A."/>
            <person name="Gonzalez J.M."/>
            <person name="Schell M.A."/>
            <person name="Sun F."/>
            <person name="Richardson P."/>
        </authorList>
    </citation>
    <scope>NUCLEOTIDE SEQUENCE [LARGE SCALE GENOMIC DNA]</scope>
    <source>
        <strain>TM1040</strain>
    </source>
</reference>
<gene>
    <name evidence="1" type="primary">ihfA</name>
    <name evidence="1" type="synonym">himA</name>
    <name type="ordered locus">TM1040_0913</name>
</gene>
<evidence type="ECO:0000255" key="1">
    <source>
        <dbReference type="HAMAP-Rule" id="MF_00380"/>
    </source>
</evidence>
<feature type="chain" id="PRO_0000277783" description="Integration host factor subunit alpha">
    <location>
        <begin position="1"/>
        <end position="100"/>
    </location>
</feature>
<comment type="function">
    <text evidence="1">This protein is one of the two subunits of integration host factor, a specific DNA-binding protein that functions in genetic recombination as well as in transcriptional and translational control.</text>
</comment>
<comment type="subunit">
    <text evidence="1">Heterodimer of an alpha and a beta chain.</text>
</comment>
<comment type="similarity">
    <text evidence="1">Belongs to the bacterial histone-like protein family.</text>
</comment>
<protein>
    <recommendedName>
        <fullName evidence="1">Integration host factor subunit alpha</fullName>
        <shortName evidence="1">IHF-alpha</shortName>
    </recommendedName>
</protein>
<sequence>MTEKTITRMDLSEAVFREVGLSRNESAQLVESMLQHMSDALVRGEQVKISSFGTFSVRDKSARVGRNPKTGEEVPIQPRRVLTFRPSHLMKDRVADGNKS</sequence>